<proteinExistence type="inferred from homology"/>
<organism>
    <name type="scientific">Vibrio atlanticus (strain LGP32)</name>
    <name type="common">Vibrio splendidus (strain Mel32)</name>
    <dbReference type="NCBI Taxonomy" id="575788"/>
    <lineage>
        <taxon>Bacteria</taxon>
        <taxon>Pseudomonadati</taxon>
        <taxon>Pseudomonadota</taxon>
        <taxon>Gammaproteobacteria</taxon>
        <taxon>Vibrionales</taxon>
        <taxon>Vibrionaceae</taxon>
        <taxon>Vibrio</taxon>
    </lineage>
</organism>
<gene>
    <name evidence="1" type="primary">mgsA</name>
    <name type="ordered locus">VS_II1055</name>
</gene>
<protein>
    <recommendedName>
        <fullName evidence="1">Methylglyoxal synthase</fullName>
        <shortName evidence="1">MGS</shortName>
        <ecNumber evidence="1">4.2.3.3</ecNumber>
    </recommendedName>
</protein>
<feature type="chain" id="PRO_1000146632" description="Methylglyoxal synthase">
    <location>
        <begin position="1"/>
        <end position="151"/>
    </location>
</feature>
<feature type="domain" description="MGS-like" evidence="1">
    <location>
        <begin position="6"/>
        <end position="151"/>
    </location>
</feature>
<feature type="active site" description="Proton donor/acceptor" evidence="1">
    <location>
        <position position="71"/>
    </location>
</feature>
<feature type="binding site" evidence="1">
    <location>
        <position position="19"/>
    </location>
    <ligand>
        <name>substrate</name>
    </ligand>
</feature>
<feature type="binding site" evidence="1">
    <location>
        <position position="23"/>
    </location>
    <ligand>
        <name>substrate</name>
    </ligand>
</feature>
<feature type="binding site" evidence="1">
    <location>
        <begin position="45"/>
        <end position="48"/>
    </location>
    <ligand>
        <name>substrate</name>
    </ligand>
</feature>
<feature type="binding site" evidence="1">
    <location>
        <begin position="65"/>
        <end position="66"/>
    </location>
    <ligand>
        <name>substrate</name>
    </ligand>
</feature>
<feature type="binding site" evidence="1">
    <location>
        <position position="98"/>
    </location>
    <ligand>
        <name>substrate</name>
    </ligand>
</feature>
<name>MGSA_VIBA3</name>
<evidence type="ECO:0000255" key="1">
    <source>
        <dbReference type="HAMAP-Rule" id="MF_00549"/>
    </source>
</evidence>
<sequence length="151" mass="16979">MQKTTRTMPTHKNIALVAHDHFKPELLRWVKENKEKLQKHFLYATGTTGSLLSKETGLAIKSMISGPMGGDQQLGALISEGKIDMMIFFWDPLNAVPHDPDVKALLRIASVWNIPVATNRATANFLFNSSLLEEEVIIEIPDYEAYLAERT</sequence>
<comment type="function">
    <text evidence="1">Catalyzes the formation of methylglyoxal from dihydroxyacetone phosphate.</text>
</comment>
<comment type="catalytic activity">
    <reaction evidence="1">
        <text>dihydroxyacetone phosphate = methylglyoxal + phosphate</text>
        <dbReference type="Rhea" id="RHEA:17937"/>
        <dbReference type="ChEBI" id="CHEBI:17158"/>
        <dbReference type="ChEBI" id="CHEBI:43474"/>
        <dbReference type="ChEBI" id="CHEBI:57642"/>
        <dbReference type="EC" id="4.2.3.3"/>
    </reaction>
</comment>
<comment type="similarity">
    <text evidence="1">Belongs to the methylglyoxal synthase family.</text>
</comment>
<reference key="1">
    <citation type="submission" date="2009-02" db="EMBL/GenBank/DDBJ databases">
        <title>Vibrio splendidus str. LGP32 complete genome.</title>
        <authorList>
            <person name="Mazel D."/>
            <person name="Le Roux F."/>
        </authorList>
    </citation>
    <scope>NUCLEOTIDE SEQUENCE [LARGE SCALE GENOMIC DNA]</scope>
    <source>
        <strain>LGP32</strain>
    </source>
</reference>
<accession>B7VS36</accession>
<dbReference type="EC" id="4.2.3.3" evidence="1"/>
<dbReference type="EMBL" id="FM954973">
    <property type="protein sequence ID" value="CAV26921.1"/>
    <property type="molecule type" value="Genomic_DNA"/>
</dbReference>
<dbReference type="SMR" id="B7VS36"/>
<dbReference type="STRING" id="575788.VS_II1055"/>
<dbReference type="KEGG" id="vsp:VS_II1055"/>
<dbReference type="eggNOG" id="COG1803">
    <property type="taxonomic scope" value="Bacteria"/>
</dbReference>
<dbReference type="HOGENOM" id="CLU_120420_0_1_6"/>
<dbReference type="Proteomes" id="UP000009100">
    <property type="component" value="Chromosome 2"/>
</dbReference>
<dbReference type="GO" id="GO:0005829">
    <property type="term" value="C:cytosol"/>
    <property type="evidence" value="ECO:0007669"/>
    <property type="project" value="TreeGrafter"/>
</dbReference>
<dbReference type="GO" id="GO:0008929">
    <property type="term" value="F:methylglyoxal synthase activity"/>
    <property type="evidence" value="ECO:0007669"/>
    <property type="project" value="UniProtKB-UniRule"/>
</dbReference>
<dbReference type="GO" id="GO:0019242">
    <property type="term" value="P:methylglyoxal biosynthetic process"/>
    <property type="evidence" value="ECO:0007669"/>
    <property type="project" value="UniProtKB-UniRule"/>
</dbReference>
<dbReference type="CDD" id="cd01422">
    <property type="entry name" value="MGS"/>
    <property type="match status" value="1"/>
</dbReference>
<dbReference type="FunFam" id="3.40.50.1380:FF:000002">
    <property type="entry name" value="Methylglyoxal synthase"/>
    <property type="match status" value="1"/>
</dbReference>
<dbReference type="Gene3D" id="3.40.50.1380">
    <property type="entry name" value="Methylglyoxal synthase-like domain"/>
    <property type="match status" value="1"/>
</dbReference>
<dbReference type="HAMAP" id="MF_00549">
    <property type="entry name" value="Methylglyoxal_synth"/>
    <property type="match status" value="1"/>
</dbReference>
<dbReference type="InterPro" id="IPR004363">
    <property type="entry name" value="Methylgl_synth"/>
</dbReference>
<dbReference type="InterPro" id="IPR018148">
    <property type="entry name" value="Methylglyoxal_synth_AS"/>
</dbReference>
<dbReference type="InterPro" id="IPR011607">
    <property type="entry name" value="MGS-like_dom"/>
</dbReference>
<dbReference type="InterPro" id="IPR036914">
    <property type="entry name" value="MGS-like_dom_sf"/>
</dbReference>
<dbReference type="NCBIfam" id="TIGR00160">
    <property type="entry name" value="MGSA"/>
    <property type="match status" value="1"/>
</dbReference>
<dbReference type="NCBIfam" id="NF003559">
    <property type="entry name" value="PRK05234.1"/>
    <property type="match status" value="1"/>
</dbReference>
<dbReference type="PANTHER" id="PTHR30492">
    <property type="entry name" value="METHYLGLYOXAL SYNTHASE"/>
    <property type="match status" value="1"/>
</dbReference>
<dbReference type="PANTHER" id="PTHR30492:SF0">
    <property type="entry name" value="METHYLGLYOXAL SYNTHASE"/>
    <property type="match status" value="1"/>
</dbReference>
<dbReference type="Pfam" id="PF02142">
    <property type="entry name" value="MGS"/>
    <property type="match status" value="1"/>
</dbReference>
<dbReference type="PIRSF" id="PIRSF006614">
    <property type="entry name" value="Methylglyox_syn"/>
    <property type="match status" value="1"/>
</dbReference>
<dbReference type="SMART" id="SM00851">
    <property type="entry name" value="MGS"/>
    <property type="match status" value="1"/>
</dbReference>
<dbReference type="SUPFAM" id="SSF52335">
    <property type="entry name" value="Methylglyoxal synthase-like"/>
    <property type="match status" value="1"/>
</dbReference>
<dbReference type="PROSITE" id="PS01335">
    <property type="entry name" value="METHYLGLYOXAL_SYNTH"/>
    <property type="match status" value="1"/>
</dbReference>
<dbReference type="PROSITE" id="PS51855">
    <property type="entry name" value="MGS"/>
    <property type="match status" value="1"/>
</dbReference>
<keyword id="KW-0456">Lyase</keyword>